<organism>
    <name type="scientific">Rattus norvegicus</name>
    <name type="common">Rat</name>
    <dbReference type="NCBI Taxonomy" id="10116"/>
    <lineage>
        <taxon>Eukaryota</taxon>
        <taxon>Metazoa</taxon>
        <taxon>Chordata</taxon>
        <taxon>Craniata</taxon>
        <taxon>Vertebrata</taxon>
        <taxon>Euteleostomi</taxon>
        <taxon>Mammalia</taxon>
        <taxon>Eutheria</taxon>
        <taxon>Euarchontoglires</taxon>
        <taxon>Glires</taxon>
        <taxon>Rodentia</taxon>
        <taxon>Myomorpha</taxon>
        <taxon>Muroidea</taxon>
        <taxon>Muridae</taxon>
        <taxon>Murinae</taxon>
        <taxon>Rattus</taxon>
    </lineage>
</organism>
<reference key="1">
    <citation type="journal article" date="2003" name="J. Biol. Chem.">
        <title>A brain-specific isoform of small glutamine-rich tetratricopeptide repeat-containing protein binds to Hsc70 and the cysteine string protein.</title>
        <authorList>
            <person name="Tobaben S."/>
            <person name="Varoqueaux F."/>
            <person name="Brose N."/>
            <person name="Stahl B."/>
            <person name="Meyer G."/>
        </authorList>
    </citation>
    <scope>NUCLEOTIDE SEQUENCE [MRNA]</scope>
    <scope>FUNCTION</scope>
    <scope>SUBUNIT</scope>
    <scope>TISSUE SPECIFICITY</scope>
</reference>
<reference key="2">
    <citation type="journal article" date="2012" name="Nat. Commun.">
        <title>Quantitative maps of protein phosphorylation sites across 14 different rat organs and tissues.</title>
        <authorList>
            <person name="Lundby A."/>
            <person name="Secher A."/>
            <person name="Lage K."/>
            <person name="Nordsborg N.B."/>
            <person name="Dmytriyev A."/>
            <person name="Lundby C."/>
            <person name="Olsen J.V."/>
        </authorList>
    </citation>
    <scope>IDENTIFICATION BY MASS SPECTROMETRY [LARGE SCALE ANALYSIS]</scope>
</reference>
<protein>
    <recommendedName>
        <fullName>Small glutamine-rich tetratricopeptide repeat-containing protein beta</fullName>
    </recommendedName>
    <alternativeName>
        <fullName>Beta-SGT</fullName>
    </alternativeName>
    <alternativeName>
        <fullName>Small glutamine-rich protein with tetratricopeptide repeats 2</fullName>
    </alternativeName>
</protein>
<keyword id="KW-0007">Acetylation</keyword>
<keyword id="KW-0143">Chaperone</keyword>
<keyword id="KW-0597">Phosphoprotein</keyword>
<keyword id="KW-1185">Reference proteome</keyword>
<keyword id="KW-0677">Repeat</keyword>
<keyword id="KW-0802">TPR repeat</keyword>
<sequence length="304" mass="33488">MSSVKPLVYAVIRFLREQSQMDAYTSDEQESLEVAIQCLETVFKISPEDTHLAVSQPLTEMFTNSVCKNDIRPLSNSVPEDVGKADQLKDEGNNHMKEENYAAAVDCYTQAIELDPNNAVYYCNRAAAQSKLSHYTDAIKDCEKAIAIDSKYSKAYGRMGLALTAMNKFEEAVTSYQKALDLDPENDSYKSNLKIAEQKLREVSSPTGTGLTFDMASLINNPAFITMAASLMQNPQVQQLMSGMMTNAIGGPAAGVGGLTDLSSLIQAGQQFAQQIQQQNPELIEQLRNHIRSRSFSSSTEEHS</sequence>
<gene>
    <name type="primary">Sgtb</name>
    <name type="synonym">Sgt2</name>
</gene>
<evidence type="ECO:0000250" key="1">
    <source>
        <dbReference type="UniProtKB" id="O43765"/>
    </source>
</evidence>
<evidence type="ECO:0000250" key="2">
    <source>
        <dbReference type="UniProtKB" id="Q96EQ0"/>
    </source>
</evidence>
<evidence type="ECO:0000269" key="3">
    <source>
    </source>
</evidence>
<evidence type="ECO:0000305" key="4"/>
<feature type="chain" id="PRO_0000333275" description="Small glutamine-rich tetratricopeptide repeat-containing protein beta">
    <location>
        <begin position="1"/>
        <end position="304"/>
    </location>
</feature>
<feature type="repeat" description="TPR 1">
    <location>
        <begin position="15"/>
        <end position="49"/>
    </location>
</feature>
<feature type="repeat" description="TPR 2">
    <location>
        <begin position="85"/>
        <end position="118"/>
    </location>
</feature>
<feature type="repeat" description="TPR 3">
    <location>
        <begin position="120"/>
        <end position="152"/>
    </location>
</feature>
<feature type="repeat" description="TPR 4">
    <location>
        <begin position="153"/>
        <end position="186"/>
    </location>
</feature>
<feature type="modified residue" description="N6-acetyllysine" evidence="1">
    <location>
        <position position="131"/>
    </location>
</feature>
<feature type="modified residue" description="Phosphoserine" evidence="1">
    <location>
        <position position="293"/>
    </location>
</feature>
<feature type="modified residue" description="Phosphoserine" evidence="2">
    <location>
        <position position="295"/>
    </location>
</feature>
<feature type="modified residue" description="Phosphoserine" evidence="2">
    <location>
        <position position="297"/>
    </location>
</feature>
<accession>Q80W98</accession>
<comment type="function">
    <text evidence="3">Co-chaperone that binds directly to HSC70 and HSP70 and regulates their ATPase activity.</text>
</comment>
<comment type="subunit">
    <text evidence="3">Homooligomerize.</text>
</comment>
<comment type="tissue specificity">
    <text evidence="3">Expressed specifically in brain.</text>
</comment>
<comment type="similarity">
    <text evidence="4">Belongs to the SGT family.</text>
</comment>
<proteinExistence type="evidence at protein level"/>
<name>SGTB_RAT</name>
<dbReference type="EMBL" id="AF368280">
    <property type="protein sequence ID" value="AAP29458.1"/>
    <property type="molecule type" value="mRNA"/>
</dbReference>
<dbReference type="RefSeq" id="NP_853660.1">
    <property type="nucleotide sequence ID" value="NM_181629.3"/>
</dbReference>
<dbReference type="RefSeq" id="XP_006231944.1">
    <property type="nucleotide sequence ID" value="XM_006231882.5"/>
</dbReference>
<dbReference type="SMR" id="Q80W98"/>
<dbReference type="BioGRID" id="254771">
    <property type="interactions" value="1"/>
</dbReference>
<dbReference type="FunCoup" id="Q80W98">
    <property type="interactions" value="2198"/>
</dbReference>
<dbReference type="STRING" id="10116.ENSRNOP00000016129"/>
<dbReference type="PhosphoSitePlus" id="Q80W98"/>
<dbReference type="PaxDb" id="10116-ENSRNOP00000016129"/>
<dbReference type="Ensembl" id="ENSRNOT00000016129.6">
    <property type="protein sequence ID" value="ENSRNOP00000016129.2"/>
    <property type="gene ID" value="ENSRNOG00000011937.6"/>
</dbReference>
<dbReference type="GeneID" id="294708"/>
<dbReference type="KEGG" id="rno:294708"/>
<dbReference type="UCSC" id="RGD:727976">
    <property type="organism name" value="rat"/>
</dbReference>
<dbReference type="AGR" id="RGD:727976"/>
<dbReference type="CTD" id="54557"/>
<dbReference type="RGD" id="727976">
    <property type="gene designation" value="Sgtb"/>
</dbReference>
<dbReference type="eggNOG" id="KOG0553">
    <property type="taxonomic scope" value="Eukaryota"/>
</dbReference>
<dbReference type="GeneTree" id="ENSGT00940000158321"/>
<dbReference type="HOGENOM" id="CLU_044224_0_0_1"/>
<dbReference type="InParanoid" id="Q80W98"/>
<dbReference type="OMA" id="DMARNMM"/>
<dbReference type="OrthoDB" id="2335338at2759"/>
<dbReference type="PhylomeDB" id="Q80W98"/>
<dbReference type="TreeFam" id="TF313092"/>
<dbReference type="PRO" id="PR:Q80W98"/>
<dbReference type="Proteomes" id="UP000002494">
    <property type="component" value="Chromosome 2"/>
</dbReference>
<dbReference type="Bgee" id="ENSRNOG00000011937">
    <property type="expression patterns" value="Expressed in frontal cortex and 17 other cell types or tissues"/>
</dbReference>
<dbReference type="GO" id="GO:0016020">
    <property type="term" value="C:membrane"/>
    <property type="evidence" value="ECO:0000318"/>
    <property type="project" value="GO_Central"/>
</dbReference>
<dbReference type="GO" id="GO:0072380">
    <property type="term" value="C:TRC complex"/>
    <property type="evidence" value="ECO:0000318"/>
    <property type="project" value="GO_Central"/>
</dbReference>
<dbReference type="GO" id="GO:0030544">
    <property type="term" value="F:Hsp70 protein binding"/>
    <property type="evidence" value="ECO:0000353"/>
    <property type="project" value="RGD"/>
</dbReference>
<dbReference type="GO" id="GO:0042802">
    <property type="term" value="F:identical protein binding"/>
    <property type="evidence" value="ECO:0000314"/>
    <property type="project" value="RGD"/>
</dbReference>
<dbReference type="GO" id="GO:0060090">
    <property type="term" value="F:molecular adaptor activity"/>
    <property type="evidence" value="ECO:0000318"/>
    <property type="project" value="GO_Central"/>
</dbReference>
<dbReference type="GO" id="GO:0051087">
    <property type="term" value="F:protein-folding chaperone binding"/>
    <property type="evidence" value="ECO:0000353"/>
    <property type="project" value="RGD"/>
</dbReference>
<dbReference type="GO" id="GO:0006620">
    <property type="term" value="P:post-translational protein targeting to endoplasmic reticulum membrane"/>
    <property type="evidence" value="ECO:0000318"/>
    <property type="project" value="GO_Central"/>
</dbReference>
<dbReference type="GO" id="GO:0051291">
    <property type="term" value="P:protein heterooligomerization"/>
    <property type="evidence" value="ECO:0000314"/>
    <property type="project" value="RGD"/>
</dbReference>
<dbReference type="GO" id="GO:0051260">
    <property type="term" value="P:protein homooligomerization"/>
    <property type="evidence" value="ECO:0000314"/>
    <property type="project" value="RGD"/>
</dbReference>
<dbReference type="FunFam" id="1.20.5.420:FF:000002">
    <property type="entry name" value="Small glutamine-rich tetratricopeptide repeat-containing protein alpha"/>
    <property type="match status" value="1"/>
</dbReference>
<dbReference type="FunFam" id="1.25.40.10:FF:000103">
    <property type="entry name" value="small glutamine-rich tetratricopeptide repeat-containing protein beta"/>
    <property type="match status" value="1"/>
</dbReference>
<dbReference type="Gene3D" id="1.20.5.420">
    <property type="entry name" value="Immunoglobulin FC, subunit C"/>
    <property type="match status" value="1"/>
</dbReference>
<dbReference type="Gene3D" id="1.25.40.10">
    <property type="entry name" value="Tetratricopeptide repeat domain"/>
    <property type="match status" value="1"/>
</dbReference>
<dbReference type="InterPro" id="IPR047150">
    <property type="entry name" value="SGT"/>
</dbReference>
<dbReference type="InterPro" id="IPR032374">
    <property type="entry name" value="SGTA_dimer"/>
</dbReference>
<dbReference type="InterPro" id="IPR011990">
    <property type="entry name" value="TPR-like_helical_dom_sf"/>
</dbReference>
<dbReference type="InterPro" id="IPR019734">
    <property type="entry name" value="TPR_rpt"/>
</dbReference>
<dbReference type="PANTHER" id="PTHR45831">
    <property type="entry name" value="LD24721P"/>
    <property type="match status" value="1"/>
</dbReference>
<dbReference type="PANTHER" id="PTHR45831:SF1">
    <property type="entry name" value="SMALL GLUTAMINE-RICH TETRATRICOPEPTIDE REPEAT-CONTAINING PROTEIN BETA"/>
    <property type="match status" value="1"/>
</dbReference>
<dbReference type="Pfam" id="PF16546">
    <property type="entry name" value="SGTA_dimer"/>
    <property type="match status" value="1"/>
</dbReference>
<dbReference type="Pfam" id="PF00515">
    <property type="entry name" value="TPR_1"/>
    <property type="match status" value="1"/>
</dbReference>
<dbReference type="Pfam" id="PF13414">
    <property type="entry name" value="TPR_11"/>
    <property type="match status" value="1"/>
</dbReference>
<dbReference type="SMART" id="SM00028">
    <property type="entry name" value="TPR"/>
    <property type="match status" value="3"/>
</dbReference>
<dbReference type="SUPFAM" id="SSF48452">
    <property type="entry name" value="TPR-like"/>
    <property type="match status" value="1"/>
</dbReference>
<dbReference type="PROSITE" id="PS50005">
    <property type="entry name" value="TPR"/>
    <property type="match status" value="3"/>
</dbReference>
<dbReference type="PROSITE" id="PS50293">
    <property type="entry name" value="TPR_REGION"/>
    <property type="match status" value="1"/>
</dbReference>